<keyword id="KW-0067">ATP-binding</keyword>
<keyword id="KW-0347">Helicase</keyword>
<keyword id="KW-0378">Hydrolase</keyword>
<keyword id="KW-0507">mRNA processing</keyword>
<keyword id="KW-0508">mRNA splicing</keyword>
<keyword id="KW-0547">Nucleotide-binding</keyword>
<keyword id="KW-0539">Nucleus</keyword>
<keyword id="KW-1185">Reference proteome</keyword>
<comment type="function">
    <text evidence="1">ATP-dependent RNA helicase involved spliceosome assembly and in nuclear splicing. Catalyzes an ATP-dependent conformational change of U2 snRNP. Bridges U1 and U2 snRNPs and enables stable U2 snRNP association with intron RNA (By similarity).</text>
</comment>
<comment type="catalytic activity">
    <reaction>
        <text>ATP + H2O = ADP + phosphate + H(+)</text>
        <dbReference type="Rhea" id="RHEA:13065"/>
        <dbReference type="ChEBI" id="CHEBI:15377"/>
        <dbReference type="ChEBI" id="CHEBI:15378"/>
        <dbReference type="ChEBI" id="CHEBI:30616"/>
        <dbReference type="ChEBI" id="CHEBI:43474"/>
        <dbReference type="ChEBI" id="CHEBI:456216"/>
        <dbReference type="EC" id="3.6.4.13"/>
    </reaction>
</comment>
<comment type="subcellular location">
    <subcellularLocation>
        <location evidence="1">Nucleus</location>
    </subcellularLocation>
</comment>
<comment type="domain">
    <text>The Q motif is unique to and characteristic of the DEAD box family of RNA helicases and controls ATP binding and hydrolysis.</text>
</comment>
<comment type="similarity">
    <text evidence="5">Belongs to the DEAD box helicase family. DDX46/PRP5 subfamily.</text>
</comment>
<name>PRP5_EMENI</name>
<feature type="chain" id="PRO_0000232363" description="Pre-mRNA-processing ATP-dependent RNA helicase prp5">
    <location>
        <begin position="1"/>
        <end position="1173"/>
    </location>
</feature>
<feature type="domain" description="Helicase ATP-binding" evidence="2">
    <location>
        <begin position="572"/>
        <end position="750"/>
    </location>
</feature>
<feature type="domain" description="Helicase C-terminal" evidence="3">
    <location>
        <begin position="761"/>
        <end position="927"/>
    </location>
</feature>
<feature type="region of interest" description="Disordered" evidence="4">
    <location>
        <begin position="1"/>
        <end position="232"/>
    </location>
</feature>
<feature type="region of interest" description="Disordered" evidence="4">
    <location>
        <begin position="268"/>
        <end position="418"/>
    </location>
</feature>
<feature type="region of interest" description="Disordered" evidence="4">
    <location>
        <begin position="938"/>
        <end position="989"/>
    </location>
</feature>
<feature type="short sequence motif" description="Q motif">
    <location>
        <begin position="541"/>
        <end position="569"/>
    </location>
</feature>
<feature type="short sequence motif" description="DEAD box">
    <location>
        <begin position="698"/>
        <end position="701"/>
    </location>
</feature>
<feature type="compositionally biased region" description="Low complexity" evidence="4">
    <location>
        <begin position="8"/>
        <end position="20"/>
    </location>
</feature>
<feature type="compositionally biased region" description="Basic and acidic residues" evidence="4">
    <location>
        <begin position="24"/>
        <end position="100"/>
    </location>
</feature>
<feature type="compositionally biased region" description="Basic and acidic residues" evidence="4">
    <location>
        <begin position="107"/>
        <end position="154"/>
    </location>
</feature>
<feature type="compositionally biased region" description="Basic and acidic residues" evidence="4">
    <location>
        <begin position="166"/>
        <end position="198"/>
    </location>
</feature>
<feature type="compositionally biased region" description="Polar residues" evidence="4">
    <location>
        <begin position="219"/>
        <end position="228"/>
    </location>
</feature>
<feature type="compositionally biased region" description="Polar residues" evidence="4">
    <location>
        <begin position="270"/>
        <end position="290"/>
    </location>
</feature>
<feature type="compositionally biased region" description="Acidic residues" evidence="4">
    <location>
        <begin position="356"/>
        <end position="374"/>
    </location>
</feature>
<feature type="compositionally biased region" description="Basic and acidic residues" evidence="4">
    <location>
        <begin position="381"/>
        <end position="390"/>
    </location>
</feature>
<feature type="compositionally biased region" description="Low complexity" evidence="4">
    <location>
        <begin position="395"/>
        <end position="404"/>
    </location>
</feature>
<feature type="compositionally biased region" description="Basic and acidic residues" evidence="4">
    <location>
        <begin position="405"/>
        <end position="414"/>
    </location>
</feature>
<feature type="compositionally biased region" description="Basic and acidic residues" evidence="4">
    <location>
        <begin position="950"/>
        <end position="973"/>
    </location>
</feature>
<feature type="binding site" evidence="2">
    <location>
        <begin position="585"/>
        <end position="592"/>
    </location>
    <ligand>
        <name>ATP</name>
        <dbReference type="ChEBI" id="CHEBI:30616"/>
    </ligand>
</feature>
<accession>Q5BDW4</accession>
<accession>C8VSH4</accession>
<reference key="1">
    <citation type="journal article" date="2005" name="Nature">
        <title>Sequencing of Aspergillus nidulans and comparative analysis with A. fumigatus and A. oryzae.</title>
        <authorList>
            <person name="Galagan J.E."/>
            <person name="Calvo S.E."/>
            <person name="Cuomo C."/>
            <person name="Ma L.-J."/>
            <person name="Wortman J.R."/>
            <person name="Batzoglou S."/>
            <person name="Lee S.-I."/>
            <person name="Bastuerkmen M."/>
            <person name="Spevak C.C."/>
            <person name="Clutterbuck J."/>
            <person name="Kapitonov V."/>
            <person name="Jurka J."/>
            <person name="Scazzocchio C."/>
            <person name="Farman M.L."/>
            <person name="Butler J."/>
            <person name="Purcell S."/>
            <person name="Harris S."/>
            <person name="Braus G.H."/>
            <person name="Draht O."/>
            <person name="Busch S."/>
            <person name="D'Enfert C."/>
            <person name="Bouchier C."/>
            <person name="Goldman G.H."/>
            <person name="Bell-Pedersen D."/>
            <person name="Griffiths-Jones S."/>
            <person name="Doonan J.H."/>
            <person name="Yu J."/>
            <person name="Vienken K."/>
            <person name="Pain A."/>
            <person name="Freitag M."/>
            <person name="Selker E.U."/>
            <person name="Archer D.B."/>
            <person name="Penalva M.A."/>
            <person name="Oakley B.R."/>
            <person name="Momany M."/>
            <person name="Tanaka T."/>
            <person name="Kumagai T."/>
            <person name="Asai K."/>
            <person name="Machida M."/>
            <person name="Nierman W.C."/>
            <person name="Denning D.W."/>
            <person name="Caddick M.X."/>
            <person name="Hynes M."/>
            <person name="Paoletti M."/>
            <person name="Fischer R."/>
            <person name="Miller B.L."/>
            <person name="Dyer P.S."/>
            <person name="Sachs M.S."/>
            <person name="Osmani S.A."/>
            <person name="Birren B.W."/>
        </authorList>
    </citation>
    <scope>NUCLEOTIDE SEQUENCE [LARGE SCALE GENOMIC DNA]</scope>
    <source>
        <strain>FGSC A4 / ATCC 38163 / CBS 112.46 / NRRL 194 / M139</strain>
    </source>
</reference>
<reference key="2">
    <citation type="journal article" date="2009" name="Fungal Genet. Biol.">
        <title>The 2008 update of the Aspergillus nidulans genome annotation: a community effort.</title>
        <authorList>
            <person name="Wortman J.R."/>
            <person name="Gilsenan J.M."/>
            <person name="Joardar V."/>
            <person name="Deegan J."/>
            <person name="Clutterbuck J."/>
            <person name="Andersen M.R."/>
            <person name="Archer D."/>
            <person name="Bencina M."/>
            <person name="Braus G."/>
            <person name="Coutinho P."/>
            <person name="von Dohren H."/>
            <person name="Doonan J."/>
            <person name="Driessen A.J."/>
            <person name="Durek P."/>
            <person name="Espeso E."/>
            <person name="Fekete E."/>
            <person name="Flipphi M."/>
            <person name="Estrada C.G."/>
            <person name="Geysens S."/>
            <person name="Goldman G."/>
            <person name="de Groot P.W."/>
            <person name="Hansen K."/>
            <person name="Harris S.D."/>
            <person name="Heinekamp T."/>
            <person name="Helmstaedt K."/>
            <person name="Henrissat B."/>
            <person name="Hofmann G."/>
            <person name="Homan T."/>
            <person name="Horio T."/>
            <person name="Horiuchi H."/>
            <person name="James S."/>
            <person name="Jones M."/>
            <person name="Karaffa L."/>
            <person name="Karanyi Z."/>
            <person name="Kato M."/>
            <person name="Keller N."/>
            <person name="Kelly D.E."/>
            <person name="Kiel J.A."/>
            <person name="Kim J.M."/>
            <person name="van der Klei I.J."/>
            <person name="Klis F.M."/>
            <person name="Kovalchuk A."/>
            <person name="Krasevec N."/>
            <person name="Kubicek C.P."/>
            <person name="Liu B."/>
            <person name="Maccabe A."/>
            <person name="Meyer V."/>
            <person name="Mirabito P."/>
            <person name="Miskei M."/>
            <person name="Mos M."/>
            <person name="Mullins J."/>
            <person name="Nelson D.R."/>
            <person name="Nielsen J."/>
            <person name="Oakley B.R."/>
            <person name="Osmani S.A."/>
            <person name="Pakula T."/>
            <person name="Paszewski A."/>
            <person name="Paulsen I."/>
            <person name="Pilsyk S."/>
            <person name="Pocsi I."/>
            <person name="Punt P.J."/>
            <person name="Ram A.F."/>
            <person name="Ren Q."/>
            <person name="Robellet X."/>
            <person name="Robson G."/>
            <person name="Seiboth B."/>
            <person name="van Solingen P."/>
            <person name="Specht T."/>
            <person name="Sun J."/>
            <person name="Taheri-Talesh N."/>
            <person name="Takeshita N."/>
            <person name="Ussery D."/>
            <person name="vanKuyk P.A."/>
            <person name="Visser H."/>
            <person name="van de Vondervoort P.J."/>
            <person name="de Vries R.P."/>
            <person name="Walton J."/>
            <person name="Xiang X."/>
            <person name="Xiong Y."/>
            <person name="Zeng A.P."/>
            <person name="Brandt B.W."/>
            <person name="Cornell M.J."/>
            <person name="van den Hondel C.A."/>
            <person name="Visser J."/>
            <person name="Oliver S.G."/>
            <person name="Turner G."/>
        </authorList>
    </citation>
    <scope>GENOME REANNOTATION</scope>
    <source>
        <strain>FGSC A4 / ATCC 38163 / CBS 112.46 / NRRL 194 / M139</strain>
    </source>
</reference>
<dbReference type="EC" id="3.6.4.13"/>
<dbReference type="EMBL" id="AACD01000017">
    <property type="protein sequence ID" value="EAA65859.1"/>
    <property type="molecule type" value="Genomic_DNA"/>
</dbReference>
<dbReference type="EMBL" id="BN001308">
    <property type="protein sequence ID" value="CBF87827.1"/>
    <property type="molecule type" value="Genomic_DNA"/>
</dbReference>
<dbReference type="RefSeq" id="XP_658870.1">
    <property type="nucleotide sequence ID" value="XM_653778.1"/>
</dbReference>
<dbReference type="SMR" id="Q5BDW4"/>
<dbReference type="FunCoup" id="Q5BDW4">
    <property type="interactions" value="1007"/>
</dbReference>
<dbReference type="STRING" id="227321.Q5BDW4"/>
<dbReference type="EnsemblFungi" id="CBF87827">
    <property type="protein sequence ID" value="CBF87827"/>
    <property type="gene ID" value="ANIA_01266"/>
</dbReference>
<dbReference type="KEGG" id="ani:ANIA_01266"/>
<dbReference type="VEuPathDB" id="FungiDB:AN1266"/>
<dbReference type="eggNOG" id="KOG0334">
    <property type="taxonomic scope" value="Eukaryota"/>
</dbReference>
<dbReference type="HOGENOM" id="CLU_003041_0_3_1"/>
<dbReference type="InParanoid" id="Q5BDW4"/>
<dbReference type="OMA" id="QLPMKKW"/>
<dbReference type="OrthoDB" id="196131at2759"/>
<dbReference type="Proteomes" id="UP000000560">
    <property type="component" value="Chromosome VIII"/>
</dbReference>
<dbReference type="GO" id="GO:0005634">
    <property type="term" value="C:nucleus"/>
    <property type="evidence" value="ECO:0000318"/>
    <property type="project" value="GO_Central"/>
</dbReference>
<dbReference type="GO" id="GO:0005524">
    <property type="term" value="F:ATP binding"/>
    <property type="evidence" value="ECO:0007669"/>
    <property type="project" value="UniProtKB-KW"/>
</dbReference>
<dbReference type="GO" id="GO:0016887">
    <property type="term" value="F:ATP hydrolysis activity"/>
    <property type="evidence" value="ECO:0007669"/>
    <property type="project" value="RHEA"/>
</dbReference>
<dbReference type="GO" id="GO:0003676">
    <property type="term" value="F:nucleic acid binding"/>
    <property type="evidence" value="ECO:0007669"/>
    <property type="project" value="InterPro"/>
</dbReference>
<dbReference type="GO" id="GO:0003724">
    <property type="term" value="F:RNA helicase activity"/>
    <property type="evidence" value="ECO:0007669"/>
    <property type="project" value="UniProtKB-EC"/>
</dbReference>
<dbReference type="GO" id="GO:0000398">
    <property type="term" value="P:mRNA splicing, via spliceosome"/>
    <property type="evidence" value="ECO:0000318"/>
    <property type="project" value="GO_Central"/>
</dbReference>
<dbReference type="CDD" id="cd17953">
    <property type="entry name" value="DEADc_DDX46"/>
    <property type="match status" value="1"/>
</dbReference>
<dbReference type="CDD" id="cd18787">
    <property type="entry name" value="SF2_C_DEAD"/>
    <property type="match status" value="1"/>
</dbReference>
<dbReference type="FunFam" id="3.40.50.300:FF:000079">
    <property type="entry name" value="probable ATP-dependent RNA helicase DDX17"/>
    <property type="match status" value="1"/>
</dbReference>
<dbReference type="Gene3D" id="3.40.50.300">
    <property type="entry name" value="P-loop containing nucleotide triphosphate hydrolases"/>
    <property type="match status" value="2"/>
</dbReference>
<dbReference type="InterPro" id="IPR011545">
    <property type="entry name" value="DEAD/DEAH_box_helicase_dom"/>
</dbReference>
<dbReference type="InterPro" id="IPR014001">
    <property type="entry name" value="Helicase_ATP-bd"/>
</dbReference>
<dbReference type="InterPro" id="IPR001650">
    <property type="entry name" value="Helicase_C-like"/>
</dbReference>
<dbReference type="InterPro" id="IPR027417">
    <property type="entry name" value="P-loop_NTPase"/>
</dbReference>
<dbReference type="InterPro" id="IPR056149">
    <property type="entry name" value="PRP5/DDX46/KHDC4_KH"/>
</dbReference>
<dbReference type="InterPro" id="IPR000629">
    <property type="entry name" value="RNA-helicase_DEAD-box_CS"/>
</dbReference>
<dbReference type="PANTHER" id="PTHR47958">
    <property type="entry name" value="ATP-DEPENDENT RNA HELICASE DBP3"/>
    <property type="match status" value="1"/>
</dbReference>
<dbReference type="Pfam" id="PF00270">
    <property type="entry name" value="DEAD"/>
    <property type="match status" value="1"/>
</dbReference>
<dbReference type="Pfam" id="PF00271">
    <property type="entry name" value="Helicase_C"/>
    <property type="match status" value="1"/>
</dbReference>
<dbReference type="Pfam" id="PF23469">
    <property type="entry name" value="KH_12"/>
    <property type="match status" value="1"/>
</dbReference>
<dbReference type="SMART" id="SM00487">
    <property type="entry name" value="DEXDc"/>
    <property type="match status" value="1"/>
</dbReference>
<dbReference type="SMART" id="SM00490">
    <property type="entry name" value="HELICc"/>
    <property type="match status" value="1"/>
</dbReference>
<dbReference type="SUPFAM" id="SSF52540">
    <property type="entry name" value="P-loop containing nucleoside triphosphate hydrolases"/>
    <property type="match status" value="1"/>
</dbReference>
<dbReference type="PROSITE" id="PS00039">
    <property type="entry name" value="DEAD_ATP_HELICASE"/>
    <property type="match status" value="1"/>
</dbReference>
<dbReference type="PROSITE" id="PS51192">
    <property type="entry name" value="HELICASE_ATP_BIND_1"/>
    <property type="match status" value="1"/>
</dbReference>
<dbReference type="PROSITE" id="PS51194">
    <property type="entry name" value="HELICASE_CTER"/>
    <property type="match status" value="1"/>
</dbReference>
<dbReference type="PROSITE" id="PS51195">
    <property type="entry name" value="Q_MOTIF"/>
    <property type="match status" value="1"/>
</dbReference>
<sequence>MARHGDTRSPSPVGSTYSSSRRSRRDDDRYERKRDDGRSYRRSRSPERRYRERDRDRDSYRRRDHSVDRRDSHRDEDNYRRRDRSRDRRRSRDRDHDRDYRRRSRSRDRDYRSRRDDSRDRVRRRTDDSADLKRKSRRDDSRDRTRGAEPKSREASTPAIPTRTGPTDDEKRAERLAKLEAWKQKQAAEKERKQKEAEASGGPRNILEEIDRKSGLSPAVSSPQSPATQGVDAAPAAYAGKFDPKAIAKNAAQTPAAPSVLGNDVAVPSSAKTSNAQTARVQASKASGNAPSPAVLKAKGNVGSFGLGTKQVADNEKSIATKTLGFGEEESTRRKLERLPTPPLDDADASKTAETNADDDDDVDMQDGETEEDAAAAARVAAERREERLQNESLTKTTNGNTTAKAEEADKMEVDAQEEELDPLDAFMSELAESAPPKKKAGAKFSKAQEPEAIFGDEHDVSMTAVGEGDAEDFLAIASKAKKKKDIPTVDHNKVEYEPFRRKFYTEPSDLAQMSEEEAANLRLELDGIKVRGLDVPKPVQKWSQCGLGIQTLDVIDKLGFASLTSIQAQAIPAIMSGRDVIGVAKTGSGKTMAFLIPMFRHIKDQRPLENMEGPIGLIMTPTRELATQIHKDCKPFLKALNLRAVCAYGGAPIKDQIAELKRGAEIIVCTPGRMIDLLAANAGRVTNLRRVTYVVLDEADRMFDMGFEPQVMKILSNVRPDRQTVLFSATFPRNMEALARKTLTKPIEIVVGGRSVVAPEITQIVEVCNEEKKFVRLLELLGNLYSTDENEDARSLIFVDRQEAADTLLRELMRKGYPCMSIHGGKDQIDRDSTIEDFKAGIFPVLIATSVAARGLDVKQLKLVVNYDAPNHLEDYVHRAGRTGRAGNTGTAVTFLTEDQERYSVDIAKALKQSGQEVPEAVQKLVDSFLEKVKAGKEKASNSGFGGKGLERLDQERDAARMRERRTYKTGEEGEDEEEKDEKKNEQAEEQFNKVLSAVQSTSAQLPGVPKGIDLDGKITVHKREVDPNAPNNPLDKVGSAVADIHARLSRAGVMRSGVPIDNRGPDAGAFHATLEINDFPQKARWAVTNRTNVAKILEATGTSITTKGSFYPAGKEPGPGENPKLYILVEGETELSVTNAMRELMRLLKEGTIAAVDSESRAPASGRYSVV</sequence>
<protein>
    <recommendedName>
        <fullName>Pre-mRNA-processing ATP-dependent RNA helicase prp5</fullName>
        <ecNumber>3.6.4.13</ecNumber>
    </recommendedName>
</protein>
<gene>
    <name type="primary">prp5</name>
    <name type="ORF">AN1266</name>
</gene>
<organism>
    <name type="scientific">Emericella nidulans (strain FGSC A4 / ATCC 38163 / CBS 112.46 / NRRL 194 / M139)</name>
    <name type="common">Aspergillus nidulans</name>
    <dbReference type="NCBI Taxonomy" id="227321"/>
    <lineage>
        <taxon>Eukaryota</taxon>
        <taxon>Fungi</taxon>
        <taxon>Dikarya</taxon>
        <taxon>Ascomycota</taxon>
        <taxon>Pezizomycotina</taxon>
        <taxon>Eurotiomycetes</taxon>
        <taxon>Eurotiomycetidae</taxon>
        <taxon>Eurotiales</taxon>
        <taxon>Aspergillaceae</taxon>
        <taxon>Aspergillus</taxon>
        <taxon>Aspergillus subgen. Nidulantes</taxon>
    </lineage>
</organism>
<proteinExistence type="inferred from homology"/>
<evidence type="ECO:0000250" key="1"/>
<evidence type="ECO:0000255" key="2">
    <source>
        <dbReference type="PROSITE-ProRule" id="PRU00541"/>
    </source>
</evidence>
<evidence type="ECO:0000255" key="3">
    <source>
        <dbReference type="PROSITE-ProRule" id="PRU00542"/>
    </source>
</evidence>
<evidence type="ECO:0000256" key="4">
    <source>
        <dbReference type="SAM" id="MobiDB-lite"/>
    </source>
</evidence>
<evidence type="ECO:0000305" key="5"/>